<organism>
    <name type="scientific">Escherichia coli (strain K12)</name>
    <dbReference type="NCBI Taxonomy" id="83333"/>
    <lineage>
        <taxon>Bacteria</taxon>
        <taxon>Pseudomonadati</taxon>
        <taxon>Pseudomonadota</taxon>
        <taxon>Gammaproteobacteria</taxon>
        <taxon>Enterobacterales</taxon>
        <taxon>Enterobacteriaceae</taxon>
        <taxon>Escherichia</taxon>
    </lineage>
</organism>
<feature type="signal peptide" evidence="1">
    <location>
        <begin position="1"/>
        <end position="22"/>
    </location>
</feature>
<feature type="chain" id="PRO_0000386425" description="Putative lipoprotein RzoQ">
    <location>
        <begin position="23"/>
        <end position="84"/>
    </location>
</feature>
<feature type="lipid moiety-binding region" description="N-palmitoyl cysteine" evidence="1">
    <location>
        <position position="23"/>
    </location>
</feature>
<feature type="lipid moiety-binding region" description="S-diacylglycerol cysteine" evidence="1">
    <location>
        <position position="23"/>
    </location>
</feature>
<name>RZOQ_ECOLI</name>
<reference key="1">
    <citation type="journal article" date="1997" name="Science">
        <title>The complete genome sequence of Escherichia coli K-12.</title>
        <authorList>
            <person name="Blattner F.R."/>
            <person name="Plunkett G. III"/>
            <person name="Bloch C.A."/>
            <person name="Perna N.T."/>
            <person name="Burland V."/>
            <person name="Riley M."/>
            <person name="Collado-Vides J."/>
            <person name="Glasner J.D."/>
            <person name="Rode C.K."/>
            <person name="Mayhew G.F."/>
            <person name="Gregor J."/>
            <person name="Davis N.W."/>
            <person name="Kirkpatrick H.A."/>
            <person name="Goeden M.A."/>
            <person name="Rose D.J."/>
            <person name="Mau B."/>
            <person name="Shao Y."/>
        </authorList>
    </citation>
    <scope>NUCLEOTIDE SEQUENCE [LARGE SCALE GENOMIC DNA]</scope>
    <source>
        <strain>K12 / MG1655 / ATCC 47076</strain>
    </source>
</reference>
<reference key="2">
    <citation type="journal article" date="2006" name="Mol. Syst. Biol.">
        <title>Highly accurate genome sequences of Escherichia coli K-12 strains MG1655 and W3110.</title>
        <authorList>
            <person name="Hayashi K."/>
            <person name="Morooka N."/>
            <person name="Yamamoto Y."/>
            <person name="Fujita K."/>
            <person name="Isono K."/>
            <person name="Choi S."/>
            <person name="Ohtsubo E."/>
            <person name="Baba T."/>
            <person name="Wanner B.L."/>
            <person name="Mori H."/>
            <person name="Horiuchi T."/>
        </authorList>
    </citation>
    <scope>NUCLEOTIDE SEQUENCE [LARGE SCALE GENOMIC DNA]</scope>
    <source>
        <strain>K12 / W3110 / ATCC 27325 / DSM 5911</strain>
    </source>
</reference>
<protein>
    <recommendedName>
        <fullName>Putative lipoprotein RzoQ</fullName>
    </recommendedName>
</protein>
<comment type="subcellular location">
    <subcellularLocation>
        <location evidence="1">Cell membrane</location>
        <topology evidence="1">Lipid-anchor</topology>
    </subcellularLocation>
</comment>
<comment type="miscellaneous">
    <text>Entirely encoded within the coding gene for rzpQ (AC P76158), on the same strand within another reading frame.</text>
</comment>
<sequence>MRNRNLLKFLPGLLICLIVLTSCVPKQKNMPYALTQRSIPQILPLPSEAKQPKPPKECSPTCSEILQQKLSFMLKLLTNATSQE</sequence>
<keyword id="KW-1003">Cell membrane</keyword>
<keyword id="KW-0449">Lipoprotein</keyword>
<keyword id="KW-0472">Membrane</keyword>
<keyword id="KW-0564">Palmitate</keyword>
<keyword id="KW-1185">Reference proteome</keyword>
<keyword id="KW-0732">Signal</keyword>
<evidence type="ECO:0000255" key="1">
    <source>
        <dbReference type="PROSITE-ProRule" id="PRU00303"/>
    </source>
</evidence>
<accession>C1P601</accession>
<gene>
    <name type="primary">rzoQ</name>
    <name type="ordered locus">b4689</name>
    <name type="ordered locus">JW1545.1</name>
</gene>
<proteinExistence type="inferred from homology"/>
<dbReference type="EMBL" id="U00096">
    <property type="protein sequence ID" value="ACO59993.1"/>
    <property type="molecule type" value="Genomic_DNA"/>
</dbReference>
<dbReference type="EMBL" id="AP009048">
    <property type="status" value="NOT_ANNOTATED_CDS"/>
    <property type="molecule type" value="Genomic_DNA"/>
</dbReference>
<dbReference type="RefSeq" id="YP_002791241.1">
    <property type="nucleotide sequence ID" value="NC_000913.3"/>
</dbReference>
<dbReference type="STRING" id="511145.b4689"/>
<dbReference type="PaxDb" id="511145-b4689"/>
<dbReference type="EnsemblBacteria" id="ACO59993">
    <property type="protein sequence ID" value="ACO59993"/>
    <property type="gene ID" value="b4689"/>
</dbReference>
<dbReference type="GeneID" id="7751615"/>
<dbReference type="KEGG" id="eco:b4689"/>
<dbReference type="eggNOG" id="ENOG502ZU32">
    <property type="taxonomic scope" value="Bacteria"/>
</dbReference>
<dbReference type="InParanoid" id="C1P601"/>
<dbReference type="BioCyc" id="EcoCyc:MONOMER0-4369"/>
<dbReference type="PRO" id="PR:C1P601"/>
<dbReference type="Proteomes" id="UP000000625">
    <property type="component" value="Chromosome"/>
</dbReference>
<dbReference type="GO" id="GO:0005886">
    <property type="term" value="C:plasma membrane"/>
    <property type="evidence" value="ECO:0007669"/>
    <property type="project" value="UniProtKB-SubCell"/>
</dbReference>
<dbReference type="PROSITE" id="PS51257">
    <property type="entry name" value="PROKAR_LIPOPROTEIN"/>
    <property type="match status" value="1"/>
</dbReference>